<keyword id="KW-0349">Heme</keyword>
<keyword id="KW-0408">Iron</keyword>
<keyword id="KW-0479">Metal-binding</keyword>
<keyword id="KW-0503">Monooxygenase</keyword>
<keyword id="KW-0560">Oxidoreductase</keyword>
<sequence length="438" mass="49573">MKGPIVRITPNELHIKDASFYDEIYAGSGRIRNKDERFVKTFSAPHAMVSITDHAYHRVRRGLLGEFFSQRSVIKMEPIINGAIEKLSQRLHEACQTGAVINMDAAFAAMTADVITRHAWGQSGNYLDHGNFNKQWKDAVAGTMASRVLFRHFPYMLHILMAVPLPILLKLDPGVADILKIEGLVRRLSVENVNRGIVEKQEGKTIFDALNNVSVPPEQRTAKHLIDEGHILLLAGTETTAKALSTCLCYLLLAENKNVLLALQSELRQAFPNVSTWPKWTEAQKLPYLTAVINECLRLSHGLSTRLPRTAPKESLQYKQWHIPAATPVSQTAYFVHMDPSIFPDPERFEPERWIRASKEGLHLERYIVSFSKGSRQCLGINMAYAEIFLALTHIMRNFEFQLHDTSVDDVRLFRDRFFGAAQDGSVGVRVLVNEVKY</sequence>
<organism>
    <name type="scientific">Penicillium crustosum</name>
    <name type="common">Blue mold fungus</name>
    <dbReference type="NCBI Taxonomy" id="36656"/>
    <lineage>
        <taxon>Eukaryota</taxon>
        <taxon>Fungi</taxon>
        <taxon>Dikarya</taxon>
        <taxon>Ascomycota</taxon>
        <taxon>Pezizomycotina</taxon>
        <taxon>Eurotiomycetes</taxon>
        <taxon>Eurotiomycetidae</taxon>
        <taxon>Eurotiales</taxon>
        <taxon>Aspergillaceae</taxon>
        <taxon>Penicillium</taxon>
    </lineage>
</organism>
<proteinExistence type="inferred from homology"/>
<evidence type="ECO:0000250" key="1">
    <source>
        <dbReference type="UniProtKB" id="A0A0E0RXA7"/>
    </source>
</evidence>
<evidence type="ECO:0000250" key="2">
    <source>
        <dbReference type="UniProtKB" id="A0A161CKG1"/>
    </source>
</evidence>
<evidence type="ECO:0000250" key="3">
    <source>
        <dbReference type="UniProtKB" id="P04798"/>
    </source>
</evidence>
<evidence type="ECO:0000269" key="4">
    <source>
    </source>
</evidence>
<evidence type="ECO:0000269" key="5">
    <source>
    </source>
</evidence>
<evidence type="ECO:0000303" key="6">
    <source>
    </source>
</evidence>
<evidence type="ECO:0000305" key="7"/>
<evidence type="ECO:0000305" key="8">
    <source>
    </source>
</evidence>
<reference key="1">
    <citation type="journal article" date="2019" name="J. Am. Chem. Soc.">
        <title>Peniphenone and penilactone formation in Penicillium crustosum via 1,4-Michael additions of ortho-quinone methide from hydroxyclavatol to gamma-butyrolactones from Crustosic Acid.</title>
        <authorList>
            <person name="Fan J."/>
            <person name="Liao G."/>
            <person name="Kindinger F."/>
            <person name="Ludwig-Radtke L."/>
            <person name="Yin W.B."/>
            <person name="Li S.M."/>
        </authorList>
    </citation>
    <scope>NUCLEOTIDE SEQUENCE [GENOMIC DNA]</scope>
    <scope>FUNCTION</scope>
    <scope>DISRUPTION PHENOTYPE</scope>
    <scope>PATHWAY</scope>
    <source>
        <strain>PRB-2</strain>
    </source>
</reference>
<reference key="2">
    <citation type="journal article" date="2020" name="J. Org. Chem.">
        <title>Increasing Structural Diversity of Natural Products by Michael Addition with ortho-Quinone Methide as the Acceptor.</title>
        <authorList>
            <person name="Liao G."/>
            <person name="Fan J."/>
            <person name="Ludwig-Radtke L."/>
            <person name="Backhaus K."/>
            <person name="Li S.M."/>
        </authorList>
    </citation>
    <scope>FUNCTION</scope>
</reference>
<accession>A0A481WPJ6</accession>
<feature type="chain" id="PRO_0000455066" description="Cytochrome P450 monooxygenase claJ">
    <location>
        <begin position="1"/>
        <end position="438"/>
    </location>
</feature>
<feature type="binding site" description="axial binding residue" evidence="3">
    <location>
        <position position="378"/>
    </location>
    <ligand>
        <name>heme</name>
        <dbReference type="ChEBI" id="CHEBI:30413"/>
    </ligand>
    <ligandPart>
        <name>Fe</name>
        <dbReference type="ChEBI" id="CHEBI:18248"/>
    </ligandPart>
</feature>
<protein>
    <recommendedName>
        <fullName evidence="6">Cytochrome P450 monooxygenase claJ</fullName>
        <ecNumber evidence="8">1.-.-.-</ecNumber>
    </recommendedName>
    <alternativeName>
        <fullName evidence="6">Clavatol biosynthesis cluster protein J</fullName>
    </alternativeName>
</protein>
<gene>
    <name evidence="6" type="primary">claJ</name>
</gene>
<dbReference type="EC" id="1.-.-.-" evidence="8"/>
<dbReference type="EMBL" id="MK360918">
    <property type="protein sequence ID" value="QBK15048.1"/>
    <property type="molecule type" value="Genomic_DNA"/>
</dbReference>
<dbReference type="SMR" id="A0A481WPJ6"/>
<dbReference type="GO" id="GO:0020037">
    <property type="term" value="F:heme binding"/>
    <property type="evidence" value="ECO:0007669"/>
    <property type="project" value="InterPro"/>
</dbReference>
<dbReference type="GO" id="GO:0005506">
    <property type="term" value="F:iron ion binding"/>
    <property type="evidence" value="ECO:0007669"/>
    <property type="project" value="InterPro"/>
</dbReference>
<dbReference type="GO" id="GO:0004497">
    <property type="term" value="F:monooxygenase activity"/>
    <property type="evidence" value="ECO:0007669"/>
    <property type="project" value="UniProtKB-KW"/>
</dbReference>
<dbReference type="GO" id="GO:0016705">
    <property type="term" value="F:oxidoreductase activity, acting on paired donors, with incorporation or reduction of molecular oxygen"/>
    <property type="evidence" value="ECO:0007669"/>
    <property type="project" value="InterPro"/>
</dbReference>
<dbReference type="GO" id="GO:0043386">
    <property type="term" value="P:mycotoxin biosynthetic process"/>
    <property type="evidence" value="ECO:0007669"/>
    <property type="project" value="UniProtKB-ARBA"/>
</dbReference>
<dbReference type="CDD" id="cd11062">
    <property type="entry name" value="CYP58-like"/>
    <property type="match status" value="1"/>
</dbReference>
<dbReference type="Gene3D" id="1.10.630.10">
    <property type="entry name" value="Cytochrome P450"/>
    <property type="match status" value="1"/>
</dbReference>
<dbReference type="InterPro" id="IPR001128">
    <property type="entry name" value="Cyt_P450"/>
</dbReference>
<dbReference type="InterPro" id="IPR017972">
    <property type="entry name" value="Cyt_P450_CS"/>
</dbReference>
<dbReference type="InterPro" id="IPR002401">
    <property type="entry name" value="Cyt_P450_E_grp-I"/>
</dbReference>
<dbReference type="InterPro" id="IPR036396">
    <property type="entry name" value="Cyt_P450_sf"/>
</dbReference>
<dbReference type="InterPro" id="IPR050121">
    <property type="entry name" value="Cytochrome_P450_monoxygenase"/>
</dbReference>
<dbReference type="PANTHER" id="PTHR24305">
    <property type="entry name" value="CYTOCHROME P450"/>
    <property type="match status" value="1"/>
</dbReference>
<dbReference type="PANTHER" id="PTHR24305:SF157">
    <property type="entry name" value="N-ACETYLTRYPTOPHAN 6-HYDROXYLASE IVOC-RELATED"/>
    <property type="match status" value="1"/>
</dbReference>
<dbReference type="Pfam" id="PF00067">
    <property type="entry name" value="p450"/>
    <property type="match status" value="1"/>
</dbReference>
<dbReference type="PRINTS" id="PR00463">
    <property type="entry name" value="EP450I"/>
</dbReference>
<dbReference type="PRINTS" id="PR00385">
    <property type="entry name" value="P450"/>
</dbReference>
<dbReference type="SUPFAM" id="SSF48264">
    <property type="entry name" value="Cytochrome P450"/>
    <property type="match status" value="1"/>
</dbReference>
<dbReference type="PROSITE" id="PS00086">
    <property type="entry name" value="CYTOCHROME_P450"/>
    <property type="match status" value="1"/>
</dbReference>
<name>CLAJ_PENCR</name>
<comment type="function">
    <text evidence="1 2 4 5">Cytochrome P450 monooxygenase; part of the cla gene cluster that produces clavatol and ortho-quinone methide (PubMed:30811183). The clavatol biosynthesis cluster cla and the terrestric acid cluster tra are both involved in the production of peniphenones and penilactones (PubMed:30811183). The non-reducing PKS claF is responsible for the formation of clavatol from successive condensations of 3 malonyl-CoA units, presumably with a simple acetyl-CoA starter unit, and 2 methylation steps (PubMed:30811183). The esterase claE probably collaborates with claF by catalyzing the hydrolysis of ACP-bound acyl intermediates to free the ACP from stalled intermediates (By similarity). The clavatol oxidase claD then converts clavatol to hydroxyclavatol (PubMed:30811183). Spontaneous dehydration of hydroxyclavatol leads to the accumulation of the highly active ortho-quinone methide (PubMed:30811183, PubMed:31860310). On the other hand, the PKS-NRPS hybrid traA is involved in the formation of crustosic acid, with the help of traB and traD (PubMed:30811183). The polyketide synthase module (PKS) of traA is responsible for the synthesis of the polyketide backbone via the condensation of an acetyl-CoA starter unit with 3 malonyl-CoA units (PubMed:30811183). The downstream nonribosomal peptide synthetase (NRPS) module then amidates the carboxyl end of the polyketide with L-malic acid (PubMed:30811183). Because traA lacks a designated enoylreductase (ER) domain, the required activity is provided the enoyl reductase traG (By similarity). Crustosic acid undergoes decarboxylation and isomerization to the terrestric acid, catalyzed by the 2-oxoglutarate-dependent dioxygenase traH (PubMed:30811183). Both acids are further converted to the 2 gamma-butyrolactones (R)-5-methyltetronic acid and (S)-5-carboxylmethyltetronic acid, with involvement of the cytochrome P450 monooxygenase claJ (PubMed:30811183). Spontaneous addition of the methide to these gamma-butyrolactones leads to peniphenone D and penilactone D, which undergo again stereospecific attacking by methide to give penilactones A and B (PubMed:30811183, PubMed:31860310).</text>
</comment>
<comment type="cofactor">
    <cofactor evidence="3">
        <name>heme</name>
        <dbReference type="ChEBI" id="CHEBI:30413"/>
    </cofactor>
</comment>
<comment type="pathway">
    <text evidence="4">Secondary metabolite biosynthesis.</text>
</comment>
<comment type="disruption phenotype">
    <text evidence="4">Completely abolishes the production of peniphenone D, penilactone D, penilactone A and penilactone B; but still retains the production of clavatol, hydroxyclavatol, crustosic acid and terrestric acid.</text>
</comment>
<comment type="similarity">
    <text evidence="7">Belongs to the cytochrome P450 family.</text>
</comment>